<reference key="1">
    <citation type="journal article" date="2007" name="Mol. Genet. Genomics">
        <title>Chloroplast genomes of the diatoms Phaeodactylum tricornutum and Thalassiosira pseudonana: comparison with other plastid genomes of the red lineage.</title>
        <authorList>
            <person name="Oudot-Le Secq M.-P."/>
            <person name="Grimwood J."/>
            <person name="Shapiro H."/>
            <person name="Armbrust E.V."/>
            <person name="Bowler C."/>
            <person name="Green B.R."/>
        </authorList>
    </citation>
    <scope>NUCLEOTIDE SEQUENCE [LARGE SCALE GENOMIC DNA]</scope>
    <source>
        <strain>CCAP 1055/1</strain>
    </source>
</reference>
<comment type="function">
    <text evidence="1">Binds to 23S rRNA.</text>
</comment>
<comment type="subunit">
    <text evidence="1">Part of the 50S ribosomal subunit.</text>
</comment>
<comment type="subcellular location">
    <subcellularLocation>
        <location>Plastid</location>
        <location>Chloroplast</location>
    </subcellularLocation>
</comment>
<comment type="similarity">
    <text evidence="1">Belongs to the universal ribosomal protein uL14 family.</text>
</comment>
<accession>A0T0I9</accession>
<name>RK14_PHATC</name>
<feature type="chain" id="PRO_0000276376" description="Large ribosomal subunit protein uL14c">
    <location>
        <begin position="1"/>
        <end position="121"/>
    </location>
</feature>
<organism>
    <name type="scientific">Phaeodactylum tricornutum (strain CCAP 1055/1)</name>
    <dbReference type="NCBI Taxonomy" id="556484"/>
    <lineage>
        <taxon>Eukaryota</taxon>
        <taxon>Sar</taxon>
        <taxon>Stramenopiles</taxon>
        <taxon>Ochrophyta</taxon>
        <taxon>Bacillariophyta</taxon>
        <taxon>Bacillariophyceae</taxon>
        <taxon>Bacillariophycidae</taxon>
        <taxon>Naviculales</taxon>
        <taxon>Phaeodactylaceae</taxon>
        <taxon>Phaeodactylum</taxon>
    </lineage>
</organism>
<sequence length="121" mass="13491">MIYPQTMLTVADNTGAKKVMCIRVLGGNKKYAKIGDTIIAVVKEALPNMPVKRSDVVRAVVVRTKKSIRRQDGMYIRFDDNAAVIVNMDNNPRGTRVFGPVAREIRDKNYSKIVSLAPEVL</sequence>
<evidence type="ECO:0000255" key="1">
    <source>
        <dbReference type="HAMAP-Rule" id="MF_01367"/>
    </source>
</evidence>
<evidence type="ECO:0000305" key="2"/>
<gene>
    <name evidence="1" type="primary">rpl14</name>
</gene>
<dbReference type="EMBL" id="EF067920">
    <property type="protein sequence ID" value="ABK20687.1"/>
    <property type="molecule type" value="Genomic_DNA"/>
</dbReference>
<dbReference type="RefSeq" id="YP_874464.1">
    <property type="nucleotide sequence ID" value="NC_008588.1"/>
</dbReference>
<dbReference type="SMR" id="A0T0I9"/>
<dbReference type="STRING" id="556484.A0T0I9"/>
<dbReference type="GeneID" id="4524666"/>
<dbReference type="InParanoid" id="A0T0I9"/>
<dbReference type="Proteomes" id="UP000000759">
    <property type="component" value="Chloroplast"/>
</dbReference>
<dbReference type="GO" id="GO:0009507">
    <property type="term" value="C:chloroplast"/>
    <property type="evidence" value="ECO:0007669"/>
    <property type="project" value="UniProtKB-SubCell"/>
</dbReference>
<dbReference type="GO" id="GO:0005762">
    <property type="term" value="C:mitochondrial large ribosomal subunit"/>
    <property type="evidence" value="ECO:0007669"/>
    <property type="project" value="TreeGrafter"/>
</dbReference>
<dbReference type="GO" id="GO:0070180">
    <property type="term" value="F:large ribosomal subunit rRNA binding"/>
    <property type="evidence" value="ECO:0007669"/>
    <property type="project" value="TreeGrafter"/>
</dbReference>
<dbReference type="GO" id="GO:0003735">
    <property type="term" value="F:structural constituent of ribosome"/>
    <property type="evidence" value="ECO:0007669"/>
    <property type="project" value="InterPro"/>
</dbReference>
<dbReference type="GO" id="GO:0006412">
    <property type="term" value="P:translation"/>
    <property type="evidence" value="ECO:0007669"/>
    <property type="project" value="UniProtKB-UniRule"/>
</dbReference>
<dbReference type="CDD" id="cd00337">
    <property type="entry name" value="Ribosomal_uL14"/>
    <property type="match status" value="1"/>
</dbReference>
<dbReference type="FunFam" id="2.40.150.20:FF:000001">
    <property type="entry name" value="50S ribosomal protein L14"/>
    <property type="match status" value="1"/>
</dbReference>
<dbReference type="Gene3D" id="2.40.150.20">
    <property type="entry name" value="Ribosomal protein L14"/>
    <property type="match status" value="1"/>
</dbReference>
<dbReference type="HAMAP" id="MF_01367">
    <property type="entry name" value="Ribosomal_uL14"/>
    <property type="match status" value="1"/>
</dbReference>
<dbReference type="InterPro" id="IPR000218">
    <property type="entry name" value="Ribosomal_uL14"/>
</dbReference>
<dbReference type="InterPro" id="IPR005745">
    <property type="entry name" value="Ribosomal_uL14_bac-type"/>
</dbReference>
<dbReference type="InterPro" id="IPR019972">
    <property type="entry name" value="Ribosomal_uL14_CS"/>
</dbReference>
<dbReference type="InterPro" id="IPR036853">
    <property type="entry name" value="Ribosomal_uL14_sf"/>
</dbReference>
<dbReference type="NCBIfam" id="TIGR01067">
    <property type="entry name" value="rplN_bact"/>
    <property type="match status" value="1"/>
</dbReference>
<dbReference type="PANTHER" id="PTHR11761">
    <property type="entry name" value="50S/60S RIBOSOMAL PROTEIN L14/L23"/>
    <property type="match status" value="1"/>
</dbReference>
<dbReference type="PANTHER" id="PTHR11761:SF3">
    <property type="entry name" value="LARGE RIBOSOMAL SUBUNIT PROTEIN UL14M"/>
    <property type="match status" value="1"/>
</dbReference>
<dbReference type="Pfam" id="PF00238">
    <property type="entry name" value="Ribosomal_L14"/>
    <property type="match status" value="1"/>
</dbReference>
<dbReference type="SMART" id="SM01374">
    <property type="entry name" value="Ribosomal_L14"/>
    <property type="match status" value="1"/>
</dbReference>
<dbReference type="SUPFAM" id="SSF50193">
    <property type="entry name" value="Ribosomal protein L14"/>
    <property type="match status" value="1"/>
</dbReference>
<dbReference type="PROSITE" id="PS00049">
    <property type="entry name" value="RIBOSOMAL_L14"/>
    <property type="match status" value="1"/>
</dbReference>
<geneLocation type="chloroplast"/>
<protein>
    <recommendedName>
        <fullName evidence="1">Large ribosomal subunit protein uL14c</fullName>
    </recommendedName>
    <alternativeName>
        <fullName evidence="2">50S ribosomal protein L14, chloroplastic</fullName>
    </alternativeName>
</protein>
<keyword id="KW-0150">Chloroplast</keyword>
<keyword id="KW-0934">Plastid</keyword>
<keyword id="KW-1185">Reference proteome</keyword>
<keyword id="KW-0687">Ribonucleoprotein</keyword>
<keyword id="KW-0689">Ribosomal protein</keyword>
<keyword id="KW-0694">RNA-binding</keyword>
<keyword id="KW-0699">rRNA-binding</keyword>
<proteinExistence type="inferred from homology"/>